<organism>
    <name type="scientific">Salmonella choleraesuis (strain SC-B67)</name>
    <dbReference type="NCBI Taxonomy" id="321314"/>
    <lineage>
        <taxon>Bacteria</taxon>
        <taxon>Pseudomonadati</taxon>
        <taxon>Pseudomonadota</taxon>
        <taxon>Gammaproteobacteria</taxon>
        <taxon>Enterobacterales</taxon>
        <taxon>Enterobacteriaceae</taxon>
        <taxon>Salmonella</taxon>
    </lineage>
</organism>
<accession>Q57L59</accession>
<feature type="chain" id="PRO_0000387404" description="tRNA1(Val) (adenine(37)-N6)-methyltransferase">
    <location>
        <begin position="1"/>
        <end position="263"/>
    </location>
</feature>
<keyword id="KW-0963">Cytoplasm</keyword>
<keyword id="KW-0489">Methyltransferase</keyword>
<keyword id="KW-0949">S-adenosyl-L-methionine</keyword>
<keyword id="KW-0808">Transferase</keyword>
<keyword id="KW-0819">tRNA processing</keyword>
<name>TRMN6_SALCH</name>
<protein>
    <recommendedName>
        <fullName evidence="1">tRNA1(Val) (adenine(37)-N6)-methyltransferase</fullName>
        <ecNumber evidence="1">2.1.1.223</ecNumber>
    </recommendedName>
    <alternativeName>
        <fullName evidence="1">tRNA m6A37 methyltransferase</fullName>
    </alternativeName>
</protein>
<evidence type="ECO:0000255" key="1">
    <source>
        <dbReference type="HAMAP-Rule" id="MF_01872"/>
    </source>
</evidence>
<evidence type="ECO:0000305" key="2"/>
<reference key="1">
    <citation type="journal article" date="2005" name="Nucleic Acids Res.">
        <title>The genome sequence of Salmonella enterica serovar Choleraesuis, a highly invasive and resistant zoonotic pathogen.</title>
        <authorList>
            <person name="Chiu C.-H."/>
            <person name="Tang P."/>
            <person name="Chu C."/>
            <person name="Hu S."/>
            <person name="Bao Q."/>
            <person name="Yu J."/>
            <person name="Chou Y.-Y."/>
            <person name="Wang H.-S."/>
            <person name="Lee Y.-S."/>
        </authorList>
    </citation>
    <scope>NUCLEOTIDE SEQUENCE [LARGE SCALE GENOMIC DNA]</scope>
    <source>
        <strain>SC-B67</strain>
    </source>
</reference>
<dbReference type="EC" id="2.1.1.223" evidence="1"/>
<dbReference type="EMBL" id="AE017220">
    <property type="protein sequence ID" value="AAX66553.1"/>
    <property type="status" value="ALT_INIT"/>
    <property type="molecule type" value="Genomic_DNA"/>
</dbReference>
<dbReference type="SMR" id="Q57L59"/>
<dbReference type="KEGG" id="sec:SCH_2647"/>
<dbReference type="HOGENOM" id="CLU_061983_0_0_6"/>
<dbReference type="Proteomes" id="UP000000538">
    <property type="component" value="Chromosome"/>
</dbReference>
<dbReference type="GO" id="GO:0005737">
    <property type="term" value="C:cytoplasm"/>
    <property type="evidence" value="ECO:0007669"/>
    <property type="project" value="UniProtKB-SubCell"/>
</dbReference>
<dbReference type="GO" id="GO:0003676">
    <property type="term" value="F:nucleic acid binding"/>
    <property type="evidence" value="ECO:0007669"/>
    <property type="project" value="InterPro"/>
</dbReference>
<dbReference type="GO" id="GO:0016430">
    <property type="term" value="F:tRNA (adenine-N6)-methyltransferase activity"/>
    <property type="evidence" value="ECO:0007669"/>
    <property type="project" value="UniProtKB-UniRule"/>
</dbReference>
<dbReference type="GO" id="GO:0032259">
    <property type="term" value="P:methylation"/>
    <property type="evidence" value="ECO:0007669"/>
    <property type="project" value="UniProtKB-KW"/>
</dbReference>
<dbReference type="GO" id="GO:0008033">
    <property type="term" value="P:tRNA processing"/>
    <property type="evidence" value="ECO:0007669"/>
    <property type="project" value="UniProtKB-UniRule"/>
</dbReference>
<dbReference type="CDD" id="cd02440">
    <property type="entry name" value="AdoMet_MTases"/>
    <property type="match status" value="1"/>
</dbReference>
<dbReference type="Gene3D" id="3.40.50.150">
    <property type="entry name" value="Vaccinia Virus protein VP39"/>
    <property type="match status" value="1"/>
</dbReference>
<dbReference type="HAMAP" id="MF_01872">
    <property type="entry name" value="tRNA_methyltr_YfiC"/>
    <property type="match status" value="1"/>
</dbReference>
<dbReference type="InterPro" id="IPR002052">
    <property type="entry name" value="DNA_methylase_N6_adenine_CS"/>
</dbReference>
<dbReference type="InterPro" id="IPR029063">
    <property type="entry name" value="SAM-dependent_MTases_sf"/>
</dbReference>
<dbReference type="InterPro" id="IPR007848">
    <property type="entry name" value="Small_mtfrase_dom"/>
</dbReference>
<dbReference type="InterPro" id="IPR050210">
    <property type="entry name" value="tRNA_Adenine-N(6)_MTase"/>
</dbReference>
<dbReference type="InterPro" id="IPR022882">
    <property type="entry name" value="tRNA_adenine-N6_MeTrfase"/>
</dbReference>
<dbReference type="NCBIfam" id="NF047853">
    <property type="entry name" value="tRm6a37MtseTrmN"/>
    <property type="match status" value="1"/>
</dbReference>
<dbReference type="PANTHER" id="PTHR47739">
    <property type="entry name" value="TRNA1(VAL) (ADENINE(37)-N6)-METHYLTRANSFERASE"/>
    <property type="match status" value="1"/>
</dbReference>
<dbReference type="PANTHER" id="PTHR47739:SF1">
    <property type="entry name" value="TRNA1(VAL) (ADENINE(37)-N6)-METHYLTRANSFERASE"/>
    <property type="match status" value="1"/>
</dbReference>
<dbReference type="Pfam" id="PF05175">
    <property type="entry name" value="MTS"/>
    <property type="match status" value="1"/>
</dbReference>
<dbReference type="SUPFAM" id="SSF53335">
    <property type="entry name" value="S-adenosyl-L-methionine-dependent methyltransferases"/>
    <property type="match status" value="1"/>
</dbReference>
<dbReference type="PROSITE" id="PS00092">
    <property type="entry name" value="N6_MTASE"/>
    <property type="match status" value="1"/>
</dbReference>
<gene>
    <name evidence="1" type="primary">yfiC</name>
    <name type="ordered locus">SCH_2647</name>
</gene>
<proteinExistence type="inferred from homology"/>
<sequence length="263" mass="29112">MSQSGSVLRRNGFTFKQFFVAHDRCAMKVGTDGILLGAWAPVADVKRILDIGTGSGLLALMLAQRTDDNVPIDAVELDAGAAMQAQENVAHSPWPHRITVHTDDIQRWAPRQTVRFDLIISNPPYYEPGVECATPQREQARYTATLDHQTLLAIAADCITEDGFFCVVLPEQIGNAFTQQALNMGWHLRLRTDVAENEARLPHRVLLAFSPQAGECFSDRLVIRGSDQHYSESYTALTQAFYLFMWGVNGERIDGPDSASCCG</sequence>
<comment type="function">
    <text evidence="1">Specifically methylates the adenine in position 37 of tRNA(1)(Val) (anticodon cmo5UAC).</text>
</comment>
<comment type="catalytic activity">
    <reaction evidence="1">
        <text>adenosine(37) in tRNA1(Val) + S-adenosyl-L-methionine = N(6)-methyladenosine(37) in tRNA1(Val) + S-adenosyl-L-homocysteine + H(+)</text>
        <dbReference type="Rhea" id="RHEA:43160"/>
        <dbReference type="Rhea" id="RHEA-COMP:10369"/>
        <dbReference type="Rhea" id="RHEA-COMP:10370"/>
        <dbReference type="ChEBI" id="CHEBI:15378"/>
        <dbReference type="ChEBI" id="CHEBI:57856"/>
        <dbReference type="ChEBI" id="CHEBI:59789"/>
        <dbReference type="ChEBI" id="CHEBI:74411"/>
        <dbReference type="ChEBI" id="CHEBI:74449"/>
        <dbReference type="EC" id="2.1.1.223"/>
    </reaction>
</comment>
<comment type="subcellular location">
    <subcellularLocation>
        <location evidence="1">Cytoplasm</location>
    </subcellularLocation>
</comment>
<comment type="similarity">
    <text evidence="1">Belongs to the methyltransferase superfamily. tRNA (adenine-N(6)-)-methyltransferase family.</text>
</comment>
<comment type="sequence caution" evidence="2">
    <conflict type="erroneous initiation">
        <sequence resource="EMBL-CDS" id="AAX66553"/>
    </conflict>
</comment>